<evidence type="ECO:0000250" key="1">
    <source>
        <dbReference type="UniProtKB" id="P33760"/>
    </source>
</evidence>
<evidence type="ECO:0000255" key="2"/>
<evidence type="ECO:0000305" key="3"/>
<feature type="chain" id="PRO_0000084620" description="Peroxisomal ATPase PEX6">
    <location>
        <begin position="1"/>
        <end position="1024"/>
    </location>
</feature>
<feature type="binding site" evidence="2">
    <location>
        <begin position="759"/>
        <end position="766"/>
    </location>
    <ligand>
        <name>ATP</name>
        <dbReference type="ChEBI" id="CHEBI:30616"/>
    </ligand>
</feature>
<feature type="sequence conflict" description="In Ref. 1; AAA16622." evidence="3" ref="1">
    <original>DSDT</original>
    <variation>ERPIA</variation>
    <location>
        <begin position="670"/>
        <end position="673"/>
    </location>
</feature>
<feature type="sequence conflict" description="In Ref. 1; AAA16622." evidence="3" ref="1">
    <original>G</original>
    <variation>R</variation>
    <location>
        <position position="828"/>
    </location>
</feature>
<keyword id="KW-0067">ATP-binding</keyword>
<keyword id="KW-0963">Cytoplasm</keyword>
<keyword id="KW-0378">Hydrolase</keyword>
<keyword id="KW-0472">Membrane</keyword>
<keyword id="KW-0547">Nucleotide-binding</keyword>
<keyword id="KW-0576">Peroxisome</keyword>
<keyword id="KW-0962">Peroxisome biogenesis</keyword>
<keyword id="KW-1185">Reference proteome</keyword>
<accession>P36966</accession>
<accession>Q6CBH6</accession>
<gene>
    <name type="primary">PEX6</name>
    <name type="synonym">PAY4</name>
    <name type="ordered locus">YALI0C18689g</name>
</gene>
<reference key="1">
    <citation type="journal article" date="1994" name="J. Biol. Chem.">
        <title>PAY4, a gene required for peroxisome assembly in the yeast Yarrowia lipolytica, encodes a novel member of a family of putative ATPases.</title>
        <authorList>
            <person name="Nuttley W.M."/>
            <person name="Brade A.M."/>
            <person name="Eitzen G.A."/>
            <person name="Veenhuis M."/>
            <person name="Aitchison J.D."/>
            <person name="Szilard R.K."/>
            <person name="Glover J.R."/>
            <person name="Rachubinski R.A."/>
        </authorList>
    </citation>
    <scope>NUCLEOTIDE SEQUENCE</scope>
</reference>
<reference key="2">
    <citation type="journal article" date="2004" name="Nature">
        <title>Genome evolution in yeasts.</title>
        <authorList>
            <person name="Dujon B."/>
            <person name="Sherman D."/>
            <person name="Fischer G."/>
            <person name="Durrens P."/>
            <person name="Casaregola S."/>
            <person name="Lafontaine I."/>
            <person name="de Montigny J."/>
            <person name="Marck C."/>
            <person name="Neuveglise C."/>
            <person name="Talla E."/>
            <person name="Goffard N."/>
            <person name="Frangeul L."/>
            <person name="Aigle M."/>
            <person name="Anthouard V."/>
            <person name="Babour A."/>
            <person name="Barbe V."/>
            <person name="Barnay S."/>
            <person name="Blanchin S."/>
            <person name="Beckerich J.-M."/>
            <person name="Beyne E."/>
            <person name="Bleykasten C."/>
            <person name="Boisrame A."/>
            <person name="Boyer J."/>
            <person name="Cattolico L."/>
            <person name="Confanioleri F."/>
            <person name="de Daruvar A."/>
            <person name="Despons L."/>
            <person name="Fabre E."/>
            <person name="Fairhead C."/>
            <person name="Ferry-Dumazet H."/>
            <person name="Groppi A."/>
            <person name="Hantraye F."/>
            <person name="Hennequin C."/>
            <person name="Jauniaux N."/>
            <person name="Joyet P."/>
            <person name="Kachouri R."/>
            <person name="Kerrest A."/>
            <person name="Koszul R."/>
            <person name="Lemaire M."/>
            <person name="Lesur I."/>
            <person name="Ma L."/>
            <person name="Muller H."/>
            <person name="Nicaud J.-M."/>
            <person name="Nikolski M."/>
            <person name="Oztas S."/>
            <person name="Ozier-Kalogeropoulos O."/>
            <person name="Pellenz S."/>
            <person name="Potier S."/>
            <person name="Richard G.-F."/>
            <person name="Straub M.-L."/>
            <person name="Suleau A."/>
            <person name="Swennen D."/>
            <person name="Tekaia F."/>
            <person name="Wesolowski-Louvel M."/>
            <person name="Westhof E."/>
            <person name="Wirth B."/>
            <person name="Zeniou-Meyer M."/>
            <person name="Zivanovic Y."/>
            <person name="Bolotin-Fukuhara M."/>
            <person name="Thierry A."/>
            <person name="Bouchier C."/>
            <person name="Caudron B."/>
            <person name="Scarpelli C."/>
            <person name="Gaillardin C."/>
            <person name="Weissenbach J."/>
            <person name="Wincker P."/>
            <person name="Souciet J.-L."/>
        </authorList>
    </citation>
    <scope>NUCLEOTIDE SEQUENCE [LARGE SCALE GENOMIC DNA]</scope>
    <source>
        <strain>CLIB 122 / E 150</strain>
    </source>
</reference>
<protein>
    <recommendedName>
        <fullName evidence="3">Peroxisomal ATPase PEX6</fullName>
        <ecNumber evidence="1">3.6.4.-</ecNumber>
    </recommendedName>
    <alternativeName>
        <fullName>Peroxin-6</fullName>
    </alternativeName>
    <alternativeName>
        <fullName>Peroxisomal biogenesis factor 6</fullName>
    </alternativeName>
    <alternativeName>
        <fullName>Peroxisome biosynthesis protein PAY4</fullName>
    </alternativeName>
</protein>
<organism>
    <name type="scientific">Yarrowia lipolytica (strain CLIB 122 / E 150)</name>
    <name type="common">Yeast</name>
    <name type="synonym">Candida lipolytica</name>
    <dbReference type="NCBI Taxonomy" id="284591"/>
    <lineage>
        <taxon>Eukaryota</taxon>
        <taxon>Fungi</taxon>
        <taxon>Dikarya</taxon>
        <taxon>Ascomycota</taxon>
        <taxon>Saccharomycotina</taxon>
        <taxon>Dipodascomycetes</taxon>
        <taxon>Dipodascales</taxon>
        <taxon>Dipodascales incertae sedis</taxon>
        <taxon>Yarrowia</taxon>
    </lineage>
</organism>
<comment type="function">
    <text evidence="1">Component of the PEX1-PEX6 AAA ATPase complex, a protein dislocase complex that mediates the ATP-dependent extraction of the PEX5 receptor from peroxisomal membranes, an essential step for PEX5 recycling. Specifically recognizes PEX5 monoubiquitinated at 'Cys-6', and pulls it out of the peroxisome lumen through the PEX2-PEX10-PEX12 retrotranslocation channel. Extraction by the PEX1-PEX6 AAA ATPase complex is accompanied by unfolding of the TPR repeats and release of bound cargo from PEX5.</text>
</comment>
<comment type="catalytic activity">
    <reaction evidence="1">
        <text>ATP + H2O = ADP + phosphate + H(+)</text>
        <dbReference type="Rhea" id="RHEA:13065"/>
        <dbReference type="ChEBI" id="CHEBI:15377"/>
        <dbReference type="ChEBI" id="CHEBI:15378"/>
        <dbReference type="ChEBI" id="CHEBI:30616"/>
        <dbReference type="ChEBI" id="CHEBI:43474"/>
        <dbReference type="ChEBI" id="CHEBI:456216"/>
    </reaction>
    <physiologicalReaction direction="left-to-right" evidence="1">
        <dbReference type="Rhea" id="RHEA:13066"/>
    </physiologicalReaction>
</comment>
<comment type="subunit">
    <text evidence="1">Interacts with PEX1; forming the PEX1-PEX6 AAA ATPase complex, which is composed of a heterohexamer formed by a trimer of PEX1-PEX6 dimers.</text>
</comment>
<comment type="subcellular location">
    <subcellularLocation>
        <location evidence="1">Cytoplasm</location>
        <location evidence="1">Cytosol</location>
    </subcellularLocation>
    <subcellularLocation>
        <location evidence="1">Peroxisome membrane</location>
        <topology evidence="1">Peripheral membrane protein</topology>
        <orientation evidence="1">Cytoplasmic side</orientation>
    </subcellularLocation>
</comment>
<comment type="similarity">
    <text evidence="3">Belongs to the AAA ATPase family.</text>
</comment>
<dbReference type="EC" id="3.6.4.-" evidence="1"/>
<dbReference type="EMBL" id="L23858">
    <property type="protein sequence ID" value="AAA16622.1"/>
    <property type="molecule type" value="Unassigned_DNA"/>
</dbReference>
<dbReference type="EMBL" id="CR382129">
    <property type="protein sequence ID" value="CAG82306.1"/>
    <property type="molecule type" value="Genomic_DNA"/>
</dbReference>
<dbReference type="PIR" id="A53121">
    <property type="entry name" value="A53121"/>
</dbReference>
<dbReference type="RefSeq" id="XP_501986.1">
    <property type="nucleotide sequence ID" value="XM_501986.1"/>
</dbReference>
<dbReference type="SMR" id="P36966"/>
<dbReference type="FunCoup" id="P36966">
    <property type="interactions" value="293"/>
</dbReference>
<dbReference type="STRING" id="284591.P36966"/>
<dbReference type="EnsemblFungi" id="CAG82306">
    <property type="protein sequence ID" value="CAG82306"/>
    <property type="gene ID" value="YALI0_C18689g"/>
</dbReference>
<dbReference type="KEGG" id="yli:2909504"/>
<dbReference type="VEuPathDB" id="FungiDB:YALI0_C18689g"/>
<dbReference type="HOGENOM" id="CLU_000688_0_0_1"/>
<dbReference type="InParanoid" id="P36966"/>
<dbReference type="OMA" id="DSMLNAM"/>
<dbReference type="OrthoDB" id="16723at4891"/>
<dbReference type="Proteomes" id="UP000001300">
    <property type="component" value="Chromosome C"/>
</dbReference>
<dbReference type="GO" id="GO:1904949">
    <property type="term" value="C:ATPase complex"/>
    <property type="evidence" value="ECO:0007669"/>
    <property type="project" value="EnsemblFungi"/>
</dbReference>
<dbReference type="GO" id="GO:0005829">
    <property type="term" value="C:cytosol"/>
    <property type="evidence" value="ECO:0000318"/>
    <property type="project" value="GO_Central"/>
</dbReference>
<dbReference type="GO" id="GO:0005778">
    <property type="term" value="C:peroxisomal membrane"/>
    <property type="evidence" value="ECO:0000318"/>
    <property type="project" value="GO_Central"/>
</dbReference>
<dbReference type="GO" id="GO:1990351">
    <property type="term" value="C:transporter complex"/>
    <property type="evidence" value="ECO:0007669"/>
    <property type="project" value="EnsemblFungi"/>
</dbReference>
<dbReference type="GO" id="GO:0005524">
    <property type="term" value="F:ATP binding"/>
    <property type="evidence" value="ECO:0007669"/>
    <property type="project" value="UniProtKB-KW"/>
</dbReference>
<dbReference type="GO" id="GO:0016887">
    <property type="term" value="F:ATP hydrolysis activity"/>
    <property type="evidence" value="ECO:0000318"/>
    <property type="project" value="GO_Central"/>
</dbReference>
<dbReference type="GO" id="GO:0140318">
    <property type="term" value="F:protein transporter activity"/>
    <property type="evidence" value="ECO:0007669"/>
    <property type="project" value="EnsemblFungi"/>
</dbReference>
<dbReference type="GO" id="GO:0016558">
    <property type="term" value="P:protein import into peroxisome matrix"/>
    <property type="evidence" value="ECO:0000318"/>
    <property type="project" value="GO_Central"/>
</dbReference>
<dbReference type="GO" id="GO:0016562">
    <property type="term" value="P:protein import into peroxisome matrix, receptor recycling"/>
    <property type="evidence" value="ECO:0007669"/>
    <property type="project" value="EnsemblFungi"/>
</dbReference>
<dbReference type="GO" id="GO:0043335">
    <property type="term" value="P:protein unfolding"/>
    <property type="evidence" value="ECO:0000318"/>
    <property type="project" value="GO_Central"/>
</dbReference>
<dbReference type="CDD" id="cd19527">
    <property type="entry name" value="RecA-like_PEX6_r2"/>
    <property type="match status" value="1"/>
</dbReference>
<dbReference type="FunFam" id="3.40.50.300:FF:000109">
    <property type="entry name" value="Peroxisomal biogenesis factor 6"/>
    <property type="match status" value="1"/>
</dbReference>
<dbReference type="FunFam" id="1.10.8.60:FF:000039">
    <property type="entry name" value="peroxisome biogenesis factor 6"/>
    <property type="match status" value="1"/>
</dbReference>
<dbReference type="Gene3D" id="1.10.8.60">
    <property type="match status" value="2"/>
</dbReference>
<dbReference type="Gene3D" id="3.40.50.300">
    <property type="entry name" value="P-loop containing nucleotide triphosphate hydrolases"/>
    <property type="match status" value="2"/>
</dbReference>
<dbReference type="InterPro" id="IPR003593">
    <property type="entry name" value="AAA+_ATPase"/>
</dbReference>
<dbReference type="InterPro" id="IPR050168">
    <property type="entry name" value="AAA_ATPase_domain"/>
</dbReference>
<dbReference type="InterPro" id="IPR003959">
    <property type="entry name" value="ATPase_AAA_core"/>
</dbReference>
<dbReference type="InterPro" id="IPR003960">
    <property type="entry name" value="ATPase_AAA_CS"/>
</dbReference>
<dbReference type="InterPro" id="IPR027417">
    <property type="entry name" value="P-loop_NTPase"/>
</dbReference>
<dbReference type="InterPro" id="IPR056995">
    <property type="entry name" value="PEX6_4th_dom"/>
</dbReference>
<dbReference type="InterPro" id="IPR047533">
    <property type="entry name" value="RecA-like_PEX6_r2"/>
</dbReference>
<dbReference type="PANTHER" id="PTHR23077">
    <property type="entry name" value="AAA-FAMILY ATPASE"/>
    <property type="match status" value="1"/>
</dbReference>
<dbReference type="PANTHER" id="PTHR23077:SF9">
    <property type="entry name" value="PEROXISOMAL ATPASE PEX6"/>
    <property type="match status" value="1"/>
</dbReference>
<dbReference type="Pfam" id="PF00004">
    <property type="entry name" value="AAA"/>
    <property type="match status" value="2"/>
</dbReference>
<dbReference type="Pfam" id="PF23315">
    <property type="entry name" value="PEX6_4th"/>
    <property type="match status" value="1"/>
</dbReference>
<dbReference type="SMART" id="SM00382">
    <property type="entry name" value="AAA"/>
    <property type="match status" value="2"/>
</dbReference>
<dbReference type="SUPFAM" id="SSF52540">
    <property type="entry name" value="P-loop containing nucleoside triphosphate hydrolases"/>
    <property type="match status" value="2"/>
</dbReference>
<dbReference type="PROSITE" id="PS00674">
    <property type="entry name" value="AAA"/>
    <property type="match status" value="1"/>
</dbReference>
<name>PEX6_YARLI</name>
<proteinExistence type="inferred from homology"/>
<sequence>MPSISHKPITAKLVAAPDATKLELSSYLYQQLFSDKPAEPYVAFEAPGIKWALYPASEDRSLPQYTCKADIRHVAGSLKKFMPVVLKRVNPVTIEHAIVTVPASQYETLNTPEQVLKALEPQLDKDRPVIRQGDVLLNGCRVRLCEPVNQGKVVKGTTKLTVAKEQETIQPADEAADVAFDIAEFLDFDTSVAKTRESTNLQVAPLEGAIPTPLSDRFDDCESRGFVKSETMSKLGVFSGDIVSIKTKNGAERVLRLFAYPEPNTVKYDVVYVSPILYHNIGDKEIEVTPNGETHKSVGEALDSVLEAAEEVKLARVLGPTTTDRTFQTAYHAGLQAYFKPVKRAVRVGDLIPIPFDSILARTIGEDPEMSHIPLEALAVKPDSVAWFQVTSLNGSEDPASKQYLVDSSQTKLIEGGTTSSAVIPTSVPWREYLGLDTLPKFGSEFAYADKIRNLVQISTSALSHAKLNTSVLLHSAKRGVGKSTVLRSVAAQCGISVFEISCFGLIGDNEAQTLGTLRAKLDRAYGCSPCVVVLQHLESIAKKSDQDGKDEGIVSKLVDVLADYSGHGVLLAATSNDPDKISEAIRSRFQFEIEIGVPSEPQRRQIFSHLTKSGPGGDSIRNAPISLRSDVSVENLALQSAGLTPPDLTAIVQTTRLRAIDRLNKLTKDSDTTLDDLLTLSHGTLQLTPSDFDDAIADARQKYSDSIGAPRIPNVGWDDVGGMEGVKKDILDTIETPLKYPHWFSDGVKKRSGILFYGPPGTGKTLLAKAIATTFSLNFFSVKGPELLNMYIGESEANVRRVFQKARDAKPCVVFFDELDSVAPQRGNQGDSGGVMDRIVSQLLAELDGMSTAGGEGVFVVGATNRPDLLDEALLRPGRFDKMLYLGISDTHEKQQTIMEALTRKFRLAADVSLEAISKRCPFTFTGADFYALCSDAMLNAMTRTANEVDAKIKLLNKNREEAGEEPVSIRWWFDHEATKSDIEVEVAQQDFEKAKDELSPSVSAEELQHYLKLRQQFEGGKK</sequence>